<protein>
    <recommendedName>
        <fullName evidence="1">Adenosylcobinamide-GDP ribazoletransferase</fullName>
        <ecNumber evidence="1">2.7.8.26</ecNumber>
    </recommendedName>
    <alternativeName>
        <fullName evidence="1">Cobalamin synthase</fullName>
    </alternativeName>
    <alternativeName>
        <fullName evidence="1">Cobalamin-5'-phosphate synthase</fullName>
    </alternativeName>
</protein>
<feature type="chain" id="PRO_1000045800" description="Adenosylcobinamide-GDP ribazoletransferase">
    <location>
        <begin position="1"/>
        <end position="247"/>
    </location>
</feature>
<feature type="transmembrane region" description="Helical" evidence="1">
    <location>
        <begin position="34"/>
        <end position="54"/>
    </location>
</feature>
<feature type="transmembrane region" description="Helical" evidence="1">
    <location>
        <begin position="59"/>
        <end position="79"/>
    </location>
</feature>
<feature type="transmembrane region" description="Helical" evidence="1">
    <location>
        <begin position="113"/>
        <end position="133"/>
    </location>
</feature>
<feature type="transmembrane region" description="Helical" evidence="1">
    <location>
        <begin position="138"/>
        <end position="158"/>
    </location>
</feature>
<feature type="transmembrane region" description="Helical" evidence="1">
    <location>
        <begin position="171"/>
        <end position="191"/>
    </location>
</feature>
<feature type="transmembrane region" description="Helical" evidence="1">
    <location>
        <begin position="194"/>
        <end position="214"/>
    </location>
</feature>
<dbReference type="EC" id="2.7.8.26" evidence="1"/>
<dbReference type="EMBL" id="CP000026">
    <property type="protein sequence ID" value="AAV76842.1"/>
    <property type="molecule type" value="Genomic_DNA"/>
</dbReference>
<dbReference type="RefSeq" id="WP_000039990.1">
    <property type="nucleotide sequence ID" value="NC_006511.1"/>
</dbReference>
<dbReference type="KEGG" id="spt:SPA0854"/>
<dbReference type="HOGENOM" id="CLU_057426_1_2_6"/>
<dbReference type="UniPathway" id="UPA00148">
    <property type="reaction ID" value="UER00238"/>
</dbReference>
<dbReference type="Proteomes" id="UP000008185">
    <property type="component" value="Chromosome"/>
</dbReference>
<dbReference type="GO" id="GO:0005886">
    <property type="term" value="C:plasma membrane"/>
    <property type="evidence" value="ECO:0007669"/>
    <property type="project" value="UniProtKB-SubCell"/>
</dbReference>
<dbReference type="GO" id="GO:0051073">
    <property type="term" value="F:adenosylcobinamide-GDP ribazoletransferase activity"/>
    <property type="evidence" value="ECO:0007669"/>
    <property type="project" value="UniProtKB-UniRule"/>
</dbReference>
<dbReference type="GO" id="GO:0008818">
    <property type="term" value="F:cobalamin 5'-phosphate synthase activity"/>
    <property type="evidence" value="ECO:0007669"/>
    <property type="project" value="UniProtKB-UniRule"/>
</dbReference>
<dbReference type="GO" id="GO:0009236">
    <property type="term" value="P:cobalamin biosynthetic process"/>
    <property type="evidence" value="ECO:0007669"/>
    <property type="project" value="UniProtKB-UniRule"/>
</dbReference>
<dbReference type="HAMAP" id="MF_00719">
    <property type="entry name" value="CobS"/>
    <property type="match status" value="1"/>
</dbReference>
<dbReference type="InterPro" id="IPR003805">
    <property type="entry name" value="CobS"/>
</dbReference>
<dbReference type="NCBIfam" id="TIGR00317">
    <property type="entry name" value="cobS"/>
    <property type="match status" value="1"/>
</dbReference>
<dbReference type="PANTHER" id="PTHR34148">
    <property type="entry name" value="ADENOSYLCOBINAMIDE-GDP RIBAZOLETRANSFERASE"/>
    <property type="match status" value="1"/>
</dbReference>
<dbReference type="PANTHER" id="PTHR34148:SF1">
    <property type="entry name" value="ADENOSYLCOBINAMIDE-GDP RIBAZOLETRANSFERASE"/>
    <property type="match status" value="1"/>
</dbReference>
<dbReference type="Pfam" id="PF02654">
    <property type="entry name" value="CobS"/>
    <property type="match status" value="1"/>
</dbReference>
<evidence type="ECO:0000255" key="1">
    <source>
        <dbReference type="HAMAP-Rule" id="MF_00719"/>
    </source>
</evidence>
<accession>Q5PDU1</accession>
<gene>
    <name evidence="1" type="primary">cobS</name>
    <name type="ordered locus">SPA0854</name>
</gene>
<keyword id="KW-0997">Cell inner membrane</keyword>
<keyword id="KW-1003">Cell membrane</keyword>
<keyword id="KW-0169">Cobalamin biosynthesis</keyword>
<keyword id="KW-0460">Magnesium</keyword>
<keyword id="KW-0472">Membrane</keyword>
<keyword id="KW-0808">Transferase</keyword>
<keyword id="KW-0812">Transmembrane</keyword>
<keyword id="KW-1133">Transmembrane helix</keyword>
<proteinExistence type="inferred from homology"/>
<sequence length="247" mass="26369">MSKLFWAMLAFISRLPVPSRWSQGLDFEQYSRGIVMFPFIGLILGGISGLIFILLQSWCGIPLAALFCILALALLTGGFHLDGLADTCDGIFSARRRERMLEIMRDSRLGTHGGLALIFVLLAKILVVSELALRGTPMLAALAVACAAGHGSAVLLMYRHRYAREEGLGNVFIGKVSGRQTCITLGLAVIVATVLLPGMQGLATMVVTLAAIFILGQLLKRTLGGQTGDTLGAAIELGELIFLLALL</sequence>
<comment type="function">
    <text evidence="1">Joins adenosylcobinamide-GDP and alpha-ribazole to generate adenosylcobalamin (Ado-cobalamin). Also synthesizes adenosylcobalamin 5'-phosphate from adenosylcobinamide-GDP and alpha-ribazole 5'-phosphate.</text>
</comment>
<comment type="catalytic activity">
    <reaction evidence="1">
        <text>alpha-ribazole + adenosylcob(III)inamide-GDP = adenosylcob(III)alamin + GMP + H(+)</text>
        <dbReference type="Rhea" id="RHEA:16049"/>
        <dbReference type="ChEBI" id="CHEBI:10329"/>
        <dbReference type="ChEBI" id="CHEBI:15378"/>
        <dbReference type="ChEBI" id="CHEBI:18408"/>
        <dbReference type="ChEBI" id="CHEBI:58115"/>
        <dbReference type="ChEBI" id="CHEBI:60487"/>
        <dbReference type="EC" id="2.7.8.26"/>
    </reaction>
</comment>
<comment type="catalytic activity">
    <reaction evidence="1">
        <text>alpha-ribazole 5'-phosphate + adenosylcob(III)inamide-GDP = adenosylcob(III)alamin 5'-phosphate + GMP + H(+)</text>
        <dbReference type="Rhea" id="RHEA:23560"/>
        <dbReference type="ChEBI" id="CHEBI:15378"/>
        <dbReference type="ChEBI" id="CHEBI:57918"/>
        <dbReference type="ChEBI" id="CHEBI:58115"/>
        <dbReference type="ChEBI" id="CHEBI:60487"/>
        <dbReference type="ChEBI" id="CHEBI:60493"/>
        <dbReference type="EC" id="2.7.8.26"/>
    </reaction>
</comment>
<comment type="cofactor">
    <cofactor evidence="1">
        <name>Mg(2+)</name>
        <dbReference type="ChEBI" id="CHEBI:18420"/>
    </cofactor>
</comment>
<comment type="pathway">
    <text evidence="1">Cofactor biosynthesis; adenosylcobalamin biosynthesis; adenosylcobalamin from cob(II)yrinate a,c-diamide: step 7/7.</text>
</comment>
<comment type="subcellular location">
    <subcellularLocation>
        <location evidence="1">Cell inner membrane</location>
        <topology evidence="1">Multi-pass membrane protein</topology>
    </subcellularLocation>
</comment>
<comment type="similarity">
    <text evidence="1">Belongs to the CobS family.</text>
</comment>
<reference key="1">
    <citation type="journal article" date="2004" name="Nat. Genet.">
        <title>Comparison of genome degradation in Paratyphi A and Typhi, human-restricted serovars of Salmonella enterica that cause typhoid.</title>
        <authorList>
            <person name="McClelland M."/>
            <person name="Sanderson K.E."/>
            <person name="Clifton S.W."/>
            <person name="Latreille P."/>
            <person name="Porwollik S."/>
            <person name="Sabo A."/>
            <person name="Meyer R."/>
            <person name="Bieri T."/>
            <person name="Ozersky P."/>
            <person name="McLellan M."/>
            <person name="Harkins C.R."/>
            <person name="Wang C."/>
            <person name="Nguyen C."/>
            <person name="Berghoff A."/>
            <person name="Elliott G."/>
            <person name="Kohlberg S."/>
            <person name="Strong C."/>
            <person name="Du F."/>
            <person name="Carter J."/>
            <person name="Kremizki C."/>
            <person name="Layman D."/>
            <person name="Leonard S."/>
            <person name="Sun H."/>
            <person name="Fulton L."/>
            <person name="Nash W."/>
            <person name="Miner T."/>
            <person name="Minx P."/>
            <person name="Delehaunty K."/>
            <person name="Fronick C."/>
            <person name="Magrini V."/>
            <person name="Nhan M."/>
            <person name="Warren W."/>
            <person name="Florea L."/>
            <person name="Spieth J."/>
            <person name="Wilson R.K."/>
        </authorList>
    </citation>
    <scope>NUCLEOTIDE SEQUENCE [LARGE SCALE GENOMIC DNA]</scope>
    <source>
        <strain>ATCC 9150 / SARB42</strain>
    </source>
</reference>
<organism>
    <name type="scientific">Salmonella paratyphi A (strain ATCC 9150 / SARB42)</name>
    <dbReference type="NCBI Taxonomy" id="295319"/>
    <lineage>
        <taxon>Bacteria</taxon>
        <taxon>Pseudomonadati</taxon>
        <taxon>Pseudomonadota</taxon>
        <taxon>Gammaproteobacteria</taxon>
        <taxon>Enterobacterales</taxon>
        <taxon>Enterobacteriaceae</taxon>
        <taxon>Salmonella</taxon>
    </lineage>
</organism>
<name>COBS_SALPA</name>